<accession>P38597</accession>
<sequence length="261" mass="30036">MTHQTHAYHMVNPSPWPLTGALSALLMTSGLIMWFHFNSMYLLMLGLTTNTLTMYQWWRDIVRESTFQGHHTPIVQKGLRYGMILFIVSEVFFFAGFFWAFYHSSLAPTPELGGCWPPTGITPLNPMEVPLLNTSVLLASGVSITWAHHSLMEGNRKHMLQALFITISLGVYFTLLQASEYYETPFTISDGIYGSTFFMATGFHGLHVIIGSTFLIVCFMRQLKFHFTSNHHFGFEAAAWYWHFVDVVWLFLYVSIYWWGS</sequence>
<gene>
    <name type="primary">MT-CO3</name>
    <name type="synonym">COIII</name>
    <name type="synonym">COXIII</name>
    <name type="synonym">MTCO3</name>
</gene>
<proteinExistence type="inferred from homology"/>
<protein>
    <recommendedName>
        <fullName>Cytochrome c oxidase subunit 3</fullName>
        <ecNumber>7.1.1.9</ecNumber>
    </recommendedName>
    <alternativeName>
        <fullName>Cytochrome c oxidase polypeptide III</fullName>
    </alternativeName>
</protein>
<comment type="function">
    <text evidence="2">Component of the cytochrome c oxidase, the last enzyme in the mitochondrial electron transport chain which drives oxidative phosphorylation. The respiratory chain contains 3 multisubunit complexes succinate dehydrogenase (complex II, CII), ubiquinol-cytochrome c oxidoreductase (cytochrome b-c1 complex, complex III, CIII) and cytochrome c oxidase (complex IV, CIV), that cooperate to transfer electrons derived from NADH and succinate to molecular oxygen, creating an electrochemical gradient over the inner membrane that drives transmembrane transport and the ATP synthase. Cytochrome c oxidase is the component of the respiratory chain that catalyzes the reduction of oxygen to water. Electrons originating from reduced cytochrome c in the intermembrane space (IMS) are transferred via the dinuclear copper A center (CU(A)) of subunit 2 and heme A of subunit 1 to the active site in subunit 1, a binuclear center (BNC) formed by heme A3 and copper B (CU(B)). The BNC reduces molecular oxygen to 2 water molecules using 4 electrons from cytochrome c in the IMS and 4 protons from the mitochondrial matrix.</text>
</comment>
<comment type="catalytic activity">
    <reaction evidence="2">
        <text>4 Fe(II)-[cytochrome c] + O2 + 8 H(+)(in) = 4 Fe(III)-[cytochrome c] + 2 H2O + 4 H(+)(out)</text>
        <dbReference type="Rhea" id="RHEA:11436"/>
        <dbReference type="Rhea" id="RHEA-COMP:10350"/>
        <dbReference type="Rhea" id="RHEA-COMP:14399"/>
        <dbReference type="ChEBI" id="CHEBI:15377"/>
        <dbReference type="ChEBI" id="CHEBI:15378"/>
        <dbReference type="ChEBI" id="CHEBI:15379"/>
        <dbReference type="ChEBI" id="CHEBI:29033"/>
        <dbReference type="ChEBI" id="CHEBI:29034"/>
        <dbReference type="EC" id="7.1.1.9"/>
    </reaction>
    <physiologicalReaction direction="left-to-right" evidence="2">
        <dbReference type="Rhea" id="RHEA:11437"/>
    </physiologicalReaction>
</comment>
<comment type="subunit">
    <text evidence="1">Component of the cytochrome c oxidase (complex IV, CIV), a multisubunit enzyme composed of 14 subunits. The complex is composed of a catalytic core of 3 subunits MT-CO1, MT-CO2 and MT-CO3, encoded in the mitochondrial DNA, and 11 supernumerary subunits COX4I, COX5A, COX5B, COX6A, COX6B, COX6C, COX7A, COX7B, COX7C, COX8 and NDUFA4, which are encoded in the nuclear genome. The complex exists as a monomer or a dimer and forms supercomplexes (SCs) in the inner mitochondrial membrane with NADH-ubiquinone oxidoreductase (complex I, CI) and ubiquinol-cytochrome c oxidoreductase (cytochrome b-c1 complex, complex III, CIII), resulting in different assemblies (supercomplex SCI(1)III(2)IV(1) and megacomplex MCI(2)III(2)IV(2)).</text>
</comment>
<comment type="subcellular location">
    <subcellularLocation>
        <location evidence="1">Mitochondrion inner membrane</location>
        <topology evidence="1">Multi-pass membrane protein</topology>
    </subcellularLocation>
</comment>
<comment type="similarity">
    <text evidence="3">Belongs to the cytochrome c oxidase subunit 3 family.</text>
</comment>
<feature type="chain" id="PRO_0000183789" description="Cytochrome c oxidase subunit 3">
    <location>
        <begin position="1"/>
        <end position="261"/>
    </location>
</feature>
<feature type="topological domain" description="Mitochondrial matrix" evidence="1">
    <location>
        <begin position="1"/>
        <end position="15"/>
    </location>
</feature>
<feature type="transmembrane region" description="Helical; Name=I" evidence="1">
    <location>
        <begin position="16"/>
        <end position="34"/>
    </location>
</feature>
<feature type="topological domain" description="Mitochondrial intermembrane" evidence="1">
    <location>
        <begin position="35"/>
        <end position="40"/>
    </location>
</feature>
<feature type="transmembrane region" description="Helical; Name=II" evidence="1">
    <location>
        <begin position="41"/>
        <end position="66"/>
    </location>
</feature>
<feature type="topological domain" description="Mitochondrial matrix" evidence="1">
    <location>
        <begin position="67"/>
        <end position="72"/>
    </location>
</feature>
<feature type="transmembrane region" description="Helical; Name=III" evidence="1">
    <location>
        <begin position="73"/>
        <end position="105"/>
    </location>
</feature>
<feature type="topological domain" description="Mitochondrial intermembrane" evidence="1">
    <location>
        <begin position="106"/>
        <end position="128"/>
    </location>
</feature>
<feature type="transmembrane region" description="Helical; Name=IV" evidence="1">
    <location>
        <begin position="129"/>
        <end position="152"/>
    </location>
</feature>
<feature type="topological domain" description="Mitochondrial matrix" evidence="1">
    <location>
        <begin position="153"/>
        <end position="155"/>
    </location>
</feature>
<feature type="transmembrane region" description="Helical; Name=V" evidence="1">
    <location>
        <begin position="156"/>
        <end position="183"/>
    </location>
</feature>
<feature type="topological domain" description="Mitochondrial intermembrane" evidence="1">
    <location>
        <begin position="184"/>
        <end position="190"/>
    </location>
</feature>
<feature type="transmembrane region" description="Helical; Name=VI" evidence="1">
    <location>
        <begin position="191"/>
        <end position="223"/>
    </location>
</feature>
<feature type="topological domain" description="Mitochondrial matrix" evidence="1">
    <location>
        <begin position="224"/>
        <end position="232"/>
    </location>
</feature>
<feature type="transmembrane region" description="Helical; Name=VII" evidence="1">
    <location>
        <begin position="233"/>
        <end position="256"/>
    </location>
</feature>
<feature type="topological domain" description="Mitochondrial intermembrane" evidence="1">
    <location>
        <begin position="257"/>
        <end position="261"/>
    </location>
</feature>
<dbReference type="EC" id="7.1.1.9"/>
<dbReference type="EMBL" id="X72004">
    <property type="protein sequence ID" value="CAA50883.1"/>
    <property type="molecule type" value="Genomic_DNA"/>
</dbReference>
<dbReference type="PIR" id="S41841">
    <property type="entry name" value="S41841"/>
</dbReference>
<dbReference type="RefSeq" id="NP_007075.1">
    <property type="nucleotide sequence ID" value="NC_001602.1"/>
</dbReference>
<dbReference type="SMR" id="P38597"/>
<dbReference type="GeneID" id="807746"/>
<dbReference type="CTD" id="4514"/>
<dbReference type="GO" id="GO:0005743">
    <property type="term" value="C:mitochondrial inner membrane"/>
    <property type="evidence" value="ECO:0007669"/>
    <property type="project" value="UniProtKB-SubCell"/>
</dbReference>
<dbReference type="GO" id="GO:0045277">
    <property type="term" value="C:respiratory chain complex IV"/>
    <property type="evidence" value="ECO:0000250"/>
    <property type="project" value="UniProtKB"/>
</dbReference>
<dbReference type="GO" id="GO:0004129">
    <property type="term" value="F:cytochrome-c oxidase activity"/>
    <property type="evidence" value="ECO:0007669"/>
    <property type="project" value="UniProtKB-EC"/>
</dbReference>
<dbReference type="GO" id="GO:0006123">
    <property type="term" value="P:mitochondrial electron transport, cytochrome c to oxygen"/>
    <property type="evidence" value="ECO:0007669"/>
    <property type="project" value="TreeGrafter"/>
</dbReference>
<dbReference type="GO" id="GO:0008535">
    <property type="term" value="P:respiratory chain complex IV assembly"/>
    <property type="evidence" value="ECO:0000250"/>
    <property type="project" value="UniProtKB"/>
</dbReference>
<dbReference type="CDD" id="cd01665">
    <property type="entry name" value="Cyt_c_Oxidase_III"/>
    <property type="match status" value="1"/>
</dbReference>
<dbReference type="FunFam" id="1.10.287.70:FF:000048">
    <property type="entry name" value="Cytochrome c oxidase subunit 3"/>
    <property type="match status" value="1"/>
</dbReference>
<dbReference type="FunFam" id="1.20.120.80:FF:000002">
    <property type="entry name" value="Cytochrome c oxidase subunit 3"/>
    <property type="match status" value="1"/>
</dbReference>
<dbReference type="Gene3D" id="1.10.287.70">
    <property type="match status" value="1"/>
</dbReference>
<dbReference type="Gene3D" id="1.20.120.80">
    <property type="entry name" value="Cytochrome c oxidase, subunit III, four-helix bundle"/>
    <property type="match status" value="1"/>
</dbReference>
<dbReference type="InterPro" id="IPR024791">
    <property type="entry name" value="Cyt_c/ubiquinol_Oxase_su3"/>
</dbReference>
<dbReference type="InterPro" id="IPR033945">
    <property type="entry name" value="Cyt_c_oxase_su3_dom"/>
</dbReference>
<dbReference type="InterPro" id="IPR000298">
    <property type="entry name" value="Cyt_c_oxidase-like_su3"/>
</dbReference>
<dbReference type="InterPro" id="IPR035973">
    <property type="entry name" value="Cyt_c_oxidase_su3-like_sf"/>
</dbReference>
<dbReference type="InterPro" id="IPR013833">
    <property type="entry name" value="Cyt_c_oxidase_su3_a-hlx"/>
</dbReference>
<dbReference type="PANTHER" id="PTHR11403:SF7">
    <property type="entry name" value="CYTOCHROME C OXIDASE SUBUNIT 3"/>
    <property type="match status" value="1"/>
</dbReference>
<dbReference type="PANTHER" id="PTHR11403">
    <property type="entry name" value="CYTOCHROME C OXIDASE SUBUNIT III"/>
    <property type="match status" value="1"/>
</dbReference>
<dbReference type="Pfam" id="PF00510">
    <property type="entry name" value="COX3"/>
    <property type="match status" value="1"/>
</dbReference>
<dbReference type="SUPFAM" id="SSF81452">
    <property type="entry name" value="Cytochrome c oxidase subunit III-like"/>
    <property type="match status" value="1"/>
</dbReference>
<dbReference type="PROSITE" id="PS50253">
    <property type="entry name" value="COX3"/>
    <property type="match status" value="1"/>
</dbReference>
<name>COX3_HALGR</name>
<geneLocation type="mitochondrion"/>
<organism>
    <name type="scientific">Halichoerus grypus</name>
    <name type="common">Gray seal</name>
    <name type="synonym">Phoca grypus</name>
    <dbReference type="NCBI Taxonomy" id="9711"/>
    <lineage>
        <taxon>Eukaryota</taxon>
        <taxon>Metazoa</taxon>
        <taxon>Chordata</taxon>
        <taxon>Craniata</taxon>
        <taxon>Vertebrata</taxon>
        <taxon>Euteleostomi</taxon>
        <taxon>Mammalia</taxon>
        <taxon>Eutheria</taxon>
        <taxon>Laurasiatheria</taxon>
        <taxon>Carnivora</taxon>
        <taxon>Caniformia</taxon>
        <taxon>Pinnipedia</taxon>
        <taxon>Phocidae</taxon>
        <taxon>Phocinae</taxon>
        <taxon>Halichoerus</taxon>
    </lineage>
</organism>
<reference key="1">
    <citation type="journal article" date="1993" name="J. Mol. Evol.">
        <title>The nucleotide sequence of the mitochondrial DNA molecule of the grey seal, Halichoerus grypus, and a comparison with mitochondrial sequences of other true seals.</title>
        <authorList>
            <person name="Arnason U."/>
            <person name="Gullberg A."/>
            <person name="Johnsson E."/>
            <person name="Ledje C."/>
        </authorList>
    </citation>
    <scope>NUCLEOTIDE SEQUENCE [GENOMIC DNA]</scope>
</reference>
<keyword id="KW-0472">Membrane</keyword>
<keyword id="KW-0496">Mitochondrion</keyword>
<keyword id="KW-0999">Mitochondrion inner membrane</keyword>
<keyword id="KW-1278">Translocase</keyword>
<keyword id="KW-0812">Transmembrane</keyword>
<keyword id="KW-1133">Transmembrane helix</keyword>
<evidence type="ECO:0000250" key="1">
    <source>
        <dbReference type="UniProtKB" id="P00415"/>
    </source>
</evidence>
<evidence type="ECO:0000250" key="2">
    <source>
        <dbReference type="UniProtKB" id="P00420"/>
    </source>
</evidence>
<evidence type="ECO:0000305" key="3"/>